<organism>
    <name type="scientific">Shewanella denitrificans (strain OS217 / ATCC BAA-1090 / DSM 15013)</name>
    <dbReference type="NCBI Taxonomy" id="318161"/>
    <lineage>
        <taxon>Bacteria</taxon>
        <taxon>Pseudomonadati</taxon>
        <taxon>Pseudomonadota</taxon>
        <taxon>Gammaproteobacteria</taxon>
        <taxon>Alteromonadales</taxon>
        <taxon>Shewanellaceae</taxon>
        <taxon>Shewanella</taxon>
    </lineage>
</organism>
<proteinExistence type="inferred from homology"/>
<accession>Q12PB2</accession>
<dbReference type="EMBL" id="CP000302">
    <property type="protein sequence ID" value="ABE54714.1"/>
    <property type="molecule type" value="Genomic_DNA"/>
</dbReference>
<dbReference type="RefSeq" id="WP_011495872.1">
    <property type="nucleotide sequence ID" value="NC_007954.1"/>
</dbReference>
<dbReference type="SMR" id="Q12PB2"/>
<dbReference type="STRING" id="318161.Sden_1428"/>
<dbReference type="KEGG" id="sdn:Sden_1428"/>
<dbReference type="eggNOG" id="COG0326">
    <property type="taxonomic scope" value="Bacteria"/>
</dbReference>
<dbReference type="HOGENOM" id="CLU_006684_3_0_6"/>
<dbReference type="OrthoDB" id="9802640at2"/>
<dbReference type="Proteomes" id="UP000001982">
    <property type="component" value="Chromosome"/>
</dbReference>
<dbReference type="GO" id="GO:0005737">
    <property type="term" value="C:cytoplasm"/>
    <property type="evidence" value="ECO:0007669"/>
    <property type="project" value="UniProtKB-SubCell"/>
</dbReference>
<dbReference type="GO" id="GO:0005524">
    <property type="term" value="F:ATP binding"/>
    <property type="evidence" value="ECO:0007669"/>
    <property type="project" value="UniProtKB-UniRule"/>
</dbReference>
<dbReference type="GO" id="GO:0016887">
    <property type="term" value="F:ATP hydrolysis activity"/>
    <property type="evidence" value="ECO:0007669"/>
    <property type="project" value="InterPro"/>
</dbReference>
<dbReference type="GO" id="GO:0140662">
    <property type="term" value="F:ATP-dependent protein folding chaperone"/>
    <property type="evidence" value="ECO:0007669"/>
    <property type="project" value="InterPro"/>
</dbReference>
<dbReference type="GO" id="GO:0051082">
    <property type="term" value="F:unfolded protein binding"/>
    <property type="evidence" value="ECO:0007669"/>
    <property type="project" value="UniProtKB-UniRule"/>
</dbReference>
<dbReference type="CDD" id="cd16927">
    <property type="entry name" value="HATPase_Hsp90-like"/>
    <property type="match status" value="1"/>
</dbReference>
<dbReference type="FunFam" id="3.30.230.80:FF:000002">
    <property type="entry name" value="Molecular chaperone HtpG"/>
    <property type="match status" value="1"/>
</dbReference>
<dbReference type="FunFam" id="3.30.565.10:FF:000009">
    <property type="entry name" value="Molecular chaperone HtpG"/>
    <property type="match status" value="1"/>
</dbReference>
<dbReference type="Gene3D" id="3.30.230.80">
    <property type="match status" value="1"/>
</dbReference>
<dbReference type="Gene3D" id="3.40.50.11260">
    <property type="match status" value="1"/>
</dbReference>
<dbReference type="Gene3D" id="1.20.120.790">
    <property type="entry name" value="Heat shock protein 90, C-terminal domain"/>
    <property type="match status" value="1"/>
</dbReference>
<dbReference type="Gene3D" id="3.30.565.10">
    <property type="entry name" value="Histidine kinase-like ATPase, C-terminal domain"/>
    <property type="match status" value="1"/>
</dbReference>
<dbReference type="HAMAP" id="MF_00505">
    <property type="entry name" value="HSP90"/>
    <property type="match status" value="1"/>
</dbReference>
<dbReference type="InterPro" id="IPR036890">
    <property type="entry name" value="HATPase_C_sf"/>
</dbReference>
<dbReference type="InterPro" id="IPR019805">
    <property type="entry name" value="Heat_shock_protein_90_CS"/>
</dbReference>
<dbReference type="InterPro" id="IPR037196">
    <property type="entry name" value="HSP90_C"/>
</dbReference>
<dbReference type="InterPro" id="IPR001404">
    <property type="entry name" value="Hsp90_fam"/>
</dbReference>
<dbReference type="InterPro" id="IPR020575">
    <property type="entry name" value="Hsp90_N"/>
</dbReference>
<dbReference type="InterPro" id="IPR020568">
    <property type="entry name" value="Ribosomal_Su5_D2-typ_SF"/>
</dbReference>
<dbReference type="NCBIfam" id="NF003555">
    <property type="entry name" value="PRK05218.1"/>
    <property type="match status" value="1"/>
</dbReference>
<dbReference type="PANTHER" id="PTHR11528">
    <property type="entry name" value="HEAT SHOCK PROTEIN 90 FAMILY MEMBER"/>
    <property type="match status" value="1"/>
</dbReference>
<dbReference type="Pfam" id="PF13589">
    <property type="entry name" value="HATPase_c_3"/>
    <property type="match status" value="1"/>
</dbReference>
<dbReference type="Pfam" id="PF00183">
    <property type="entry name" value="HSP90"/>
    <property type="match status" value="1"/>
</dbReference>
<dbReference type="PIRSF" id="PIRSF002583">
    <property type="entry name" value="Hsp90"/>
    <property type="match status" value="1"/>
</dbReference>
<dbReference type="PRINTS" id="PR00775">
    <property type="entry name" value="HEATSHOCK90"/>
</dbReference>
<dbReference type="SMART" id="SM00387">
    <property type="entry name" value="HATPase_c"/>
    <property type="match status" value="1"/>
</dbReference>
<dbReference type="SUPFAM" id="SSF55874">
    <property type="entry name" value="ATPase domain of HSP90 chaperone/DNA topoisomerase II/histidine kinase"/>
    <property type="match status" value="1"/>
</dbReference>
<dbReference type="SUPFAM" id="SSF110942">
    <property type="entry name" value="HSP90 C-terminal domain"/>
    <property type="match status" value="1"/>
</dbReference>
<dbReference type="SUPFAM" id="SSF54211">
    <property type="entry name" value="Ribosomal protein S5 domain 2-like"/>
    <property type="match status" value="1"/>
</dbReference>
<dbReference type="PROSITE" id="PS00298">
    <property type="entry name" value="HSP90"/>
    <property type="match status" value="1"/>
</dbReference>
<sequence>MSQQETHGFQTEVKQLLQLMIHSLYSNKEIFLRELVSNAADAADKLRYLALTDDALYEGDGELRVRVSTDKEKGTVTISDNGIGMTRDSVIEHLGTIAKSGTKEFFNNLSGEANKDSQLIGQFGVGFYSAFIVAKKVTVRTRAAGHPANEGVLWESEGEGSFNVETITKNSRGTEIVLHLRDEEKEFADDWRLRSIITKYSDHISVPVEMFEAGKDAQEGEDGETIAAVEGQWKPMNKATALWTRNKSDISDEEYQEFYKHISHDYTDALKWSHNRVEGKQEYTSLLYIPAKAPWDMWNRDHKHGLKLFVQRVFIMDEAEQFLPNYLRFVRGLLDSNDLPLNVSREILQDNQVTTAMRVGVTKRVLGMLEKLAKDEPGQYQSFWAEFGQVLKEGPAEDFANKERIAGLLRFASTHEGSAATTVSLEDYISRMKEGQDKIYYIVADSHEAAANSPHLELLRKKGIEVLLMSERIDEWLINHLTEFKGKKLHSVTRGDLELGELEDAADKEAKDKITEEAKGLVERMKAALGAKVSEVKVTTRLTDTPACVVAGEGEMSTQMIKLMQAAGQAVPESKPTFEINPNHPLVARLNDEADEQLFADWASLLLQQAQLSEKGSLADPSAFIKLMNQMLLANAK</sequence>
<comment type="function">
    <text evidence="1">Molecular chaperone. Has ATPase activity.</text>
</comment>
<comment type="subunit">
    <text evidence="1">Homodimer.</text>
</comment>
<comment type="subcellular location">
    <subcellularLocation>
        <location evidence="1">Cytoplasm</location>
    </subcellularLocation>
</comment>
<comment type="similarity">
    <text evidence="1">Belongs to the heat shock protein 90 family.</text>
</comment>
<feature type="chain" id="PRO_1000014953" description="Chaperone protein HtpG">
    <location>
        <begin position="1"/>
        <end position="637"/>
    </location>
</feature>
<feature type="region of interest" description="A; substrate-binding" evidence="1">
    <location>
        <begin position="1"/>
        <end position="345"/>
    </location>
</feature>
<feature type="region of interest" description="B" evidence="1">
    <location>
        <begin position="346"/>
        <end position="562"/>
    </location>
</feature>
<feature type="region of interest" description="C" evidence="1">
    <location>
        <begin position="563"/>
        <end position="637"/>
    </location>
</feature>
<reference key="1">
    <citation type="submission" date="2006-03" db="EMBL/GenBank/DDBJ databases">
        <title>Complete sequence of Shewanella denitrificans OS217.</title>
        <authorList>
            <consortium name="US DOE Joint Genome Institute"/>
            <person name="Copeland A."/>
            <person name="Lucas S."/>
            <person name="Lapidus A."/>
            <person name="Barry K."/>
            <person name="Detter J.C."/>
            <person name="Glavina del Rio T."/>
            <person name="Hammon N."/>
            <person name="Israni S."/>
            <person name="Dalin E."/>
            <person name="Tice H."/>
            <person name="Pitluck S."/>
            <person name="Brettin T."/>
            <person name="Bruce D."/>
            <person name="Han C."/>
            <person name="Tapia R."/>
            <person name="Gilna P."/>
            <person name="Kiss H."/>
            <person name="Schmutz J."/>
            <person name="Larimer F."/>
            <person name="Land M."/>
            <person name="Hauser L."/>
            <person name="Kyrpides N."/>
            <person name="Lykidis A."/>
            <person name="Richardson P."/>
        </authorList>
    </citation>
    <scope>NUCLEOTIDE SEQUENCE [LARGE SCALE GENOMIC DNA]</scope>
    <source>
        <strain>OS217 / ATCC BAA-1090 / DSM 15013</strain>
    </source>
</reference>
<name>HTPG_SHEDO</name>
<keyword id="KW-0067">ATP-binding</keyword>
<keyword id="KW-0143">Chaperone</keyword>
<keyword id="KW-0963">Cytoplasm</keyword>
<keyword id="KW-0547">Nucleotide-binding</keyword>
<keyword id="KW-1185">Reference proteome</keyword>
<keyword id="KW-0346">Stress response</keyword>
<gene>
    <name evidence="1" type="primary">htpG</name>
    <name type="ordered locus">Sden_1428</name>
</gene>
<evidence type="ECO:0000255" key="1">
    <source>
        <dbReference type="HAMAP-Rule" id="MF_00505"/>
    </source>
</evidence>
<protein>
    <recommendedName>
        <fullName evidence="1">Chaperone protein HtpG</fullName>
    </recommendedName>
    <alternativeName>
        <fullName evidence="1">Heat shock protein HtpG</fullName>
    </alternativeName>
    <alternativeName>
        <fullName evidence="1">High temperature protein G</fullName>
    </alternativeName>
</protein>